<sequence>MADNFNFELVSPERLLLSEMVTEVVIPATEGEMTVMAHHAPTMTTIKPGVVSVRSASGKKQDYVVFGGFADILPTGCTLLAESAVPVEELHKDELTRRIEAARKELEDTELHEHKSKLEHFIMELTHLRGVVQQD</sequence>
<organism>
    <name type="scientific">Rhizobium leguminosarum bv. trifolii (strain WSM2304)</name>
    <dbReference type="NCBI Taxonomy" id="395492"/>
    <lineage>
        <taxon>Bacteria</taxon>
        <taxon>Pseudomonadati</taxon>
        <taxon>Pseudomonadota</taxon>
        <taxon>Alphaproteobacteria</taxon>
        <taxon>Hyphomicrobiales</taxon>
        <taxon>Rhizobiaceae</taxon>
        <taxon>Rhizobium/Agrobacterium group</taxon>
        <taxon>Rhizobium</taxon>
    </lineage>
</organism>
<keyword id="KW-0066">ATP synthesis</keyword>
<keyword id="KW-0997">Cell inner membrane</keyword>
<keyword id="KW-1003">Cell membrane</keyword>
<keyword id="KW-0139">CF(1)</keyword>
<keyword id="KW-0375">Hydrogen ion transport</keyword>
<keyword id="KW-0406">Ion transport</keyword>
<keyword id="KW-0472">Membrane</keyword>
<keyword id="KW-1185">Reference proteome</keyword>
<keyword id="KW-0813">Transport</keyword>
<protein>
    <recommendedName>
        <fullName evidence="1">ATP synthase epsilon chain</fullName>
    </recommendedName>
    <alternativeName>
        <fullName evidence="1">ATP synthase F1 sector epsilon subunit</fullName>
    </alternativeName>
    <alternativeName>
        <fullName evidence="1">F-ATPase epsilon subunit</fullName>
    </alternativeName>
</protein>
<gene>
    <name evidence="1" type="primary">atpC</name>
    <name type="ordered locus">Rleg2_3650</name>
</gene>
<evidence type="ECO:0000255" key="1">
    <source>
        <dbReference type="HAMAP-Rule" id="MF_00530"/>
    </source>
</evidence>
<name>ATPE_RHILW</name>
<feature type="chain" id="PRO_1000127882" description="ATP synthase epsilon chain">
    <location>
        <begin position="1"/>
        <end position="135"/>
    </location>
</feature>
<reference key="1">
    <citation type="journal article" date="2010" name="Stand. Genomic Sci.">
        <title>Complete genome sequence of Rhizobium leguminosarum bv trifolii strain WSM2304, an effective microsymbiont of the South American clover Trifolium polymorphum.</title>
        <authorList>
            <person name="Reeve W."/>
            <person name="O'Hara G."/>
            <person name="Chain P."/>
            <person name="Ardley J."/>
            <person name="Brau L."/>
            <person name="Nandesena K."/>
            <person name="Tiwari R."/>
            <person name="Malfatti S."/>
            <person name="Kiss H."/>
            <person name="Lapidus A."/>
            <person name="Copeland A."/>
            <person name="Nolan M."/>
            <person name="Land M."/>
            <person name="Ivanova N."/>
            <person name="Mavromatis K."/>
            <person name="Markowitz V."/>
            <person name="Kyrpides N."/>
            <person name="Melino V."/>
            <person name="Denton M."/>
            <person name="Yates R."/>
            <person name="Howieson J."/>
        </authorList>
    </citation>
    <scope>NUCLEOTIDE SEQUENCE [LARGE SCALE GENOMIC DNA]</scope>
    <source>
        <strain>WSM2304</strain>
    </source>
</reference>
<dbReference type="EMBL" id="CP001191">
    <property type="protein sequence ID" value="ACI56913.1"/>
    <property type="molecule type" value="Genomic_DNA"/>
</dbReference>
<dbReference type="RefSeq" id="WP_003589854.1">
    <property type="nucleotide sequence ID" value="NC_011369.1"/>
</dbReference>
<dbReference type="SMR" id="B5ZSN5"/>
<dbReference type="STRING" id="395492.Rleg2_3650"/>
<dbReference type="KEGG" id="rlt:Rleg2_3650"/>
<dbReference type="eggNOG" id="COG0355">
    <property type="taxonomic scope" value="Bacteria"/>
</dbReference>
<dbReference type="HOGENOM" id="CLU_084338_2_1_5"/>
<dbReference type="Proteomes" id="UP000008330">
    <property type="component" value="Chromosome"/>
</dbReference>
<dbReference type="GO" id="GO:0005886">
    <property type="term" value="C:plasma membrane"/>
    <property type="evidence" value="ECO:0007669"/>
    <property type="project" value="UniProtKB-SubCell"/>
</dbReference>
<dbReference type="GO" id="GO:0045259">
    <property type="term" value="C:proton-transporting ATP synthase complex"/>
    <property type="evidence" value="ECO:0007669"/>
    <property type="project" value="UniProtKB-KW"/>
</dbReference>
<dbReference type="GO" id="GO:0005524">
    <property type="term" value="F:ATP binding"/>
    <property type="evidence" value="ECO:0007669"/>
    <property type="project" value="UniProtKB-UniRule"/>
</dbReference>
<dbReference type="GO" id="GO:0046933">
    <property type="term" value="F:proton-transporting ATP synthase activity, rotational mechanism"/>
    <property type="evidence" value="ECO:0007669"/>
    <property type="project" value="UniProtKB-UniRule"/>
</dbReference>
<dbReference type="CDD" id="cd12152">
    <property type="entry name" value="F1-ATPase_delta"/>
    <property type="match status" value="1"/>
</dbReference>
<dbReference type="Gene3D" id="2.60.15.10">
    <property type="entry name" value="F0F1 ATP synthase delta/epsilon subunit, N-terminal"/>
    <property type="match status" value="1"/>
</dbReference>
<dbReference type="HAMAP" id="MF_00530">
    <property type="entry name" value="ATP_synth_epsil_bac"/>
    <property type="match status" value="1"/>
</dbReference>
<dbReference type="InterPro" id="IPR001469">
    <property type="entry name" value="ATP_synth_F1_dsu/esu"/>
</dbReference>
<dbReference type="InterPro" id="IPR020546">
    <property type="entry name" value="ATP_synth_F1_dsu/esu_N"/>
</dbReference>
<dbReference type="InterPro" id="IPR036771">
    <property type="entry name" value="ATPsynth_dsu/esu_N"/>
</dbReference>
<dbReference type="NCBIfam" id="TIGR01216">
    <property type="entry name" value="ATP_synt_epsi"/>
    <property type="match status" value="1"/>
</dbReference>
<dbReference type="NCBIfam" id="NF001851">
    <property type="entry name" value="PRK00571.2-4"/>
    <property type="match status" value="1"/>
</dbReference>
<dbReference type="PANTHER" id="PTHR13822">
    <property type="entry name" value="ATP SYNTHASE DELTA/EPSILON CHAIN"/>
    <property type="match status" value="1"/>
</dbReference>
<dbReference type="PANTHER" id="PTHR13822:SF10">
    <property type="entry name" value="ATP SYNTHASE EPSILON CHAIN, CHLOROPLASTIC"/>
    <property type="match status" value="1"/>
</dbReference>
<dbReference type="Pfam" id="PF02823">
    <property type="entry name" value="ATP-synt_DE_N"/>
    <property type="match status" value="1"/>
</dbReference>
<dbReference type="SUPFAM" id="SSF51344">
    <property type="entry name" value="Epsilon subunit of F1F0-ATP synthase N-terminal domain"/>
    <property type="match status" value="1"/>
</dbReference>
<comment type="function">
    <text evidence="1">Produces ATP from ADP in the presence of a proton gradient across the membrane.</text>
</comment>
<comment type="subunit">
    <text evidence="1">F-type ATPases have 2 components, CF(1) - the catalytic core - and CF(0) - the membrane proton channel. CF(1) has five subunits: alpha(3), beta(3), gamma(1), delta(1), epsilon(1). CF(0) has three main subunits: a, b and c.</text>
</comment>
<comment type="subcellular location">
    <subcellularLocation>
        <location evidence="1">Cell inner membrane</location>
        <topology evidence="1">Peripheral membrane protein</topology>
    </subcellularLocation>
</comment>
<comment type="similarity">
    <text evidence="1">Belongs to the ATPase epsilon chain family.</text>
</comment>
<accession>B5ZSN5</accession>
<proteinExistence type="inferred from homology"/>